<organism>
    <name type="scientific">Arabidopsis thaliana</name>
    <name type="common">Mouse-ear cress</name>
    <dbReference type="NCBI Taxonomy" id="3702"/>
    <lineage>
        <taxon>Eukaryota</taxon>
        <taxon>Viridiplantae</taxon>
        <taxon>Streptophyta</taxon>
        <taxon>Embryophyta</taxon>
        <taxon>Tracheophyta</taxon>
        <taxon>Spermatophyta</taxon>
        <taxon>Magnoliopsida</taxon>
        <taxon>eudicotyledons</taxon>
        <taxon>Gunneridae</taxon>
        <taxon>Pentapetalae</taxon>
        <taxon>rosids</taxon>
        <taxon>malvids</taxon>
        <taxon>Brassicales</taxon>
        <taxon>Brassicaceae</taxon>
        <taxon>Camelineae</taxon>
        <taxon>Arabidopsis</taxon>
    </lineage>
</organism>
<proteinExistence type="evidence at transcript level"/>
<dbReference type="EMBL" id="AC005896">
    <property type="protein sequence ID" value="AAC98055.1"/>
    <property type="molecule type" value="Genomic_DNA"/>
</dbReference>
<dbReference type="EMBL" id="CP002685">
    <property type="protein sequence ID" value="AEC09388.1"/>
    <property type="molecule type" value="Genomic_DNA"/>
</dbReference>
<dbReference type="EMBL" id="AK117523">
    <property type="protein sequence ID" value="BAC42186.1"/>
    <property type="molecule type" value="mRNA"/>
</dbReference>
<dbReference type="PIR" id="G84791">
    <property type="entry name" value="G84791"/>
</dbReference>
<dbReference type="RefSeq" id="NP_181272.1">
    <property type="nucleotide sequence ID" value="NM_129291.4"/>
</dbReference>
<dbReference type="SMR" id="Q9ZUT0"/>
<dbReference type="BioGRID" id="3656">
    <property type="interactions" value="25"/>
</dbReference>
<dbReference type="FunCoup" id="Q9ZUT0">
    <property type="interactions" value="69"/>
</dbReference>
<dbReference type="IntAct" id="Q9ZUT0">
    <property type="interactions" value="22"/>
</dbReference>
<dbReference type="STRING" id="3702.Q9ZUT0"/>
<dbReference type="PaxDb" id="3702-AT2G37360.1"/>
<dbReference type="ProteomicsDB" id="244575"/>
<dbReference type="EnsemblPlants" id="AT2G37360.1">
    <property type="protein sequence ID" value="AT2G37360.1"/>
    <property type="gene ID" value="AT2G37360"/>
</dbReference>
<dbReference type="GeneID" id="818312"/>
<dbReference type="Gramene" id="AT2G37360.1">
    <property type="protein sequence ID" value="AT2G37360.1"/>
    <property type="gene ID" value="AT2G37360"/>
</dbReference>
<dbReference type="KEGG" id="ath:AT2G37360"/>
<dbReference type="Araport" id="AT2G37360"/>
<dbReference type="TAIR" id="AT2G37360">
    <property type="gene designation" value="ABCG2"/>
</dbReference>
<dbReference type="eggNOG" id="KOG0061">
    <property type="taxonomic scope" value="Eukaryota"/>
</dbReference>
<dbReference type="HOGENOM" id="CLU_000604_57_8_1"/>
<dbReference type="InParanoid" id="Q9ZUT0"/>
<dbReference type="OMA" id="FWITIGL"/>
<dbReference type="OrthoDB" id="66620at2759"/>
<dbReference type="PhylomeDB" id="Q9ZUT0"/>
<dbReference type="PRO" id="PR:Q9ZUT0"/>
<dbReference type="Proteomes" id="UP000006548">
    <property type="component" value="Chromosome 2"/>
</dbReference>
<dbReference type="ExpressionAtlas" id="Q9ZUT0">
    <property type="expression patterns" value="baseline and differential"/>
</dbReference>
<dbReference type="GO" id="GO:0016020">
    <property type="term" value="C:membrane"/>
    <property type="evidence" value="ECO:0007669"/>
    <property type="project" value="UniProtKB-SubCell"/>
</dbReference>
<dbReference type="GO" id="GO:0140359">
    <property type="term" value="F:ABC-type transporter activity"/>
    <property type="evidence" value="ECO:0007669"/>
    <property type="project" value="InterPro"/>
</dbReference>
<dbReference type="GO" id="GO:0005524">
    <property type="term" value="F:ATP binding"/>
    <property type="evidence" value="ECO:0007669"/>
    <property type="project" value="UniProtKB-KW"/>
</dbReference>
<dbReference type="GO" id="GO:0016887">
    <property type="term" value="F:ATP hydrolysis activity"/>
    <property type="evidence" value="ECO:0007669"/>
    <property type="project" value="InterPro"/>
</dbReference>
<dbReference type="GO" id="GO:0010345">
    <property type="term" value="P:suberin biosynthetic process"/>
    <property type="evidence" value="ECO:0000316"/>
    <property type="project" value="TAIR"/>
</dbReference>
<dbReference type="FunFam" id="3.40.50.300:FF:000530">
    <property type="entry name" value="ABC transporter G family member 6"/>
    <property type="match status" value="1"/>
</dbReference>
<dbReference type="Gene3D" id="3.40.50.300">
    <property type="entry name" value="P-loop containing nucleotide triphosphate hydrolases"/>
    <property type="match status" value="1"/>
</dbReference>
<dbReference type="InterPro" id="IPR003593">
    <property type="entry name" value="AAA+_ATPase"/>
</dbReference>
<dbReference type="InterPro" id="IPR013525">
    <property type="entry name" value="ABC2_TM"/>
</dbReference>
<dbReference type="InterPro" id="IPR003439">
    <property type="entry name" value="ABC_transporter-like_ATP-bd"/>
</dbReference>
<dbReference type="InterPro" id="IPR017871">
    <property type="entry name" value="ABC_transporter-like_CS"/>
</dbReference>
<dbReference type="InterPro" id="IPR043926">
    <property type="entry name" value="ABCG_dom"/>
</dbReference>
<dbReference type="InterPro" id="IPR050352">
    <property type="entry name" value="ABCG_transporters"/>
</dbReference>
<dbReference type="InterPro" id="IPR027417">
    <property type="entry name" value="P-loop_NTPase"/>
</dbReference>
<dbReference type="InterPro" id="IPR005284">
    <property type="entry name" value="Pigment_permease/Abcg"/>
</dbReference>
<dbReference type="NCBIfam" id="TIGR00955">
    <property type="entry name" value="3a01204"/>
    <property type="match status" value="1"/>
</dbReference>
<dbReference type="PANTHER" id="PTHR48041:SF115">
    <property type="entry name" value="ABC TRANSPORTER G FAMILY MEMBER 2"/>
    <property type="match status" value="1"/>
</dbReference>
<dbReference type="PANTHER" id="PTHR48041">
    <property type="entry name" value="ABC TRANSPORTER G FAMILY MEMBER 28"/>
    <property type="match status" value="1"/>
</dbReference>
<dbReference type="Pfam" id="PF01061">
    <property type="entry name" value="ABC2_membrane"/>
    <property type="match status" value="1"/>
</dbReference>
<dbReference type="Pfam" id="PF19055">
    <property type="entry name" value="ABC2_membrane_7"/>
    <property type="match status" value="1"/>
</dbReference>
<dbReference type="Pfam" id="PF00005">
    <property type="entry name" value="ABC_tran"/>
    <property type="match status" value="1"/>
</dbReference>
<dbReference type="SMART" id="SM00382">
    <property type="entry name" value="AAA"/>
    <property type="match status" value="1"/>
</dbReference>
<dbReference type="SUPFAM" id="SSF52540">
    <property type="entry name" value="P-loop containing nucleoside triphosphate hydrolases"/>
    <property type="match status" value="1"/>
</dbReference>
<dbReference type="PROSITE" id="PS00211">
    <property type="entry name" value="ABC_TRANSPORTER_1"/>
    <property type="match status" value="1"/>
</dbReference>
<dbReference type="PROSITE" id="PS50893">
    <property type="entry name" value="ABC_TRANSPORTER_2"/>
    <property type="match status" value="1"/>
</dbReference>
<sequence length="755" mass="83456">MSGLLGKSSPAKRVDGNNDLPMYYVNPMSVEPQGRPSDTTRVSVTFAEHLMNVEDARNDESASSRALGIASPINSAASSFNSWASAPASSISSSPFVLSFTDLTYSVKIQKKFNPLACCRRSGNDSSVNTKILLNGISGEAREGEMMAVLGASGSGKSTLIDALANRIAKDSLRGSITLNGEVLESSMQKVISAYVMQDDLLFPMLTVEETLMFSAEFRLPRSLSKKKKKARVQALIDQLGLRSAAKTVIGDEGHRGVSGGERRRVSIGNDIIHDPIILFLDEPTSGLDSTSAYMVIKVLQRIAQSGSIVIMSIHQPSYRIMGLLDQLIFLSKGNTVYSGSPTHLPQFFSEFKHPIPENENKTEFALDLIRELEYSTEGTKPLVEFHKQWRAKQAPSYNNNNKRNTNVSSLKEAITASISRGKLVSGATNNNSSNLTPSFQTFANPFWIEMIVIGKRAILNSRRQPELLGMRLGAVMVTGIILATMFTNLDNSPKGAQERLGFFAFAMSTTFYTCAEAIPVFLQERYIFMRETAYNAYRRSSYVLSQSIISIPALIVLSASFAATTFWAVGLDGGANGFFFFYFTILASFWAGSSFVTFLSGVIPNVMLGFTVVVAILAYFLLFSGFFISRDRIPVYWLWFHYISLVKYPYEGVLQNEFQNPTRCFARGVQLFDNSPLGEFPNDVKVNLLKSMSGVLGTNVTAETCVTTGIDILKQQGITDISKWNCLWITVAWGFFFRVLFYFTLLIGSKNKRK</sequence>
<keyword id="KW-0067">ATP-binding</keyword>
<keyword id="KW-0472">Membrane</keyword>
<keyword id="KW-0547">Nucleotide-binding</keyword>
<keyword id="KW-1185">Reference proteome</keyword>
<keyword id="KW-0812">Transmembrane</keyword>
<keyword id="KW-1133">Transmembrane helix</keyword>
<keyword id="KW-0813">Transport</keyword>
<comment type="subcellular location">
    <subcellularLocation>
        <location evidence="1">Membrane</location>
        <topology evidence="1">Multi-pass membrane protein</topology>
    </subcellularLocation>
</comment>
<comment type="similarity">
    <text evidence="4">Belongs to the ABC transporter superfamily. ABCG family. Eye pigment precursor importer (TC 3.A.1.204) subfamily.</text>
</comment>
<name>AB2G_ARATH</name>
<accession>Q9ZUT0</accession>
<accession>Q8GYL8</accession>
<reference key="1">
    <citation type="journal article" date="1999" name="Nature">
        <title>Sequence and analysis of chromosome 2 of the plant Arabidopsis thaliana.</title>
        <authorList>
            <person name="Lin X."/>
            <person name="Kaul S."/>
            <person name="Rounsley S.D."/>
            <person name="Shea T.P."/>
            <person name="Benito M.-I."/>
            <person name="Town C.D."/>
            <person name="Fujii C.Y."/>
            <person name="Mason T.M."/>
            <person name="Bowman C.L."/>
            <person name="Barnstead M.E."/>
            <person name="Feldblyum T.V."/>
            <person name="Buell C.R."/>
            <person name="Ketchum K.A."/>
            <person name="Lee J.J."/>
            <person name="Ronning C.M."/>
            <person name="Koo H.L."/>
            <person name="Moffat K.S."/>
            <person name="Cronin L.A."/>
            <person name="Shen M."/>
            <person name="Pai G."/>
            <person name="Van Aken S."/>
            <person name="Umayam L."/>
            <person name="Tallon L.J."/>
            <person name="Gill J.E."/>
            <person name="Adams M.D."/>
            <person name="Carrera A.J."/>
            <person name="Creasy T.H."/>
            <person name="Goodman H.M."/>
            <person name="Somerville C.R."/>
            <person name="Copenhaver G.P."/>
            <person name="Preuss D."/>
            <person name="Nierman W.C."/>
            <person name="White O."/>
            <person name="Eisen J.A."/>
            <person name="Salzberg S.L."/>
            <person name="Fraser C.M."/>
            <person name="Venter J.C."/>
        </authorList>
    </citation>
    <scope>NUCLEOTIDE SEQUENCE [LARGE SCALE GENOMIC DNA]</scope>
    <source>
        <strain>cv. Columbia</strain>
    </source>
</reference>
<reference key="2">
    <citation type="journal article" date="2017" name="Plant J.">
        <title>Araport11: a complete reannotation of the Arabidopsis thaliana reference genome.</title>
        <authorList>
            <person name="Cheng C.Y."/>
            <person name="Krishnakumar V."/>
            <person name="Chan A.P."/>
            <person name="Thibaud-Nissen F."/>
            <person name="Schobel S."/>
            <person name="Town C.D."/>
        </authorList>
    </citation>
    <scope>GENOME REANNOTATION</scope>
    <source>
        <strain>cv. Columbia</strain>
    </source>
</reference>
<reference key="3">
    <citation type="journal article" date="2002" name="Science">
        <title>Functional annotation of a full-length Arabidopsis cDNA collection.</title>
        <authorList>
            <person name="Seki M."/>
            <person name="Narusaka M."/>
            <person name="Kamiya A."/>
            <person name="Ishida J."/>
            <person name="Satou M."/>
            <person name="Sakurai T."/>
            <person name="Nakajima M."/>
            <person name="Enju A."/>
            <person name="Akiyama K."/>
            <person name="Oono Y."/>
            <person name="Muramatsu M."/>
            <person name="Hayashizaki Y."/>
            <person name="Kawai J."/>
            <person name="Carninci P."/>
            <person name="Itoh M."/>
            <person name="Ishii Y."/>
            <person name="Arakawa T."/>
            <person name="Shibata K."/>
            <person name="Shinagawa A."/>
            <person name="Shinozaki K."/>
        </authorList>
    </citation>
    <scope>NUCLEOTIDE SEQUENCE [LARGE SCALE MRNA] OF 478-755</scope>
    <source>
        <strain>cv. Columbia</strain>
    </source>
</reference>
<reference key="4">
    <citation type="journal article" date="2001" name="J. Biol. Chem.">
        <title>The Arabidopsis thaliana ABC protein superfamily, a complete inventory.</title>
        <authorList>
            <person name="Sanchez-Fernandez R."/>
            <person name="Davies T.G."/>
            <person name="Coleman J.O."/>
            <person name="Rea P.A."/>
        </authorList>
    </citation>
    <scope>GENE FAMILY</scope>
    <scope>NOMENCLATURE</scope>
</reference>
<reference key="5">
    <citation type="journal article" date="2008" name="Trends Plant Sci.">
        <title>Plant ABC proteins - a unified nomenclature and updated inventory.</title>
        <authorList>
            <person name="Verrier P.J."/>
            <person name="Bird D."/>
            <person name="Burla B."/>
            <person name="Dassa E."/>
            <person name="Forestier C."/>
            <person name="Geisler M."/>
            <person name="Klein M."/>
            <person name="Kolukisaoglu H.U."/>
            <person name="Lee Y."/>
            <person name="Martinoia E."/>
            <person name="Murphy A."/>
            <person name="Rea P.A."/>
            <person name="Samuels L."/>
            <person name="Schulz B."/>
            <person name="Spalding E.J."/>
            <person name="Yazaki K."/>
            <person name="Theodoulou F.L."/>
        </authorList>
    </citation>
    <scope>GENE FAMILY</scope>
    <scope>NOMENCLATURE</scope>
</reference>
<evidence type="ECO:0000250" key="1"/>
<evidence type="ECO:0000255" key="2"/>
<evidence type="ECO:0000255" key="3">
    <source>
        <dbReference type="PROSITE-ProRule" id="PRU00434"/>
    </source>
</evidence>
<evidence type="ECO:0000305" key="4"/>
<feature type="chain" id="PRO_0000240674" description="ABC transporter G family member 2">
    <location>
        <begin position="1"/>
        <end position="755"/>
    </location>
</feature>
<feature type="transmembrane region" description="Helical" evidence="2">
    <location>
        <begin position="468"/>
        <end position="488"/>
    </location>
</feature>
<feature type="transmembrane region" description="Helical" evidence="2">
    <location>
        <begin position="503"/>
        <end position="523"/>
    </location>
</feature>
<feature type="transmembrane region" description="Helical" evidence="2">
    <location>
        <begin position="552"/>
        <end position="572"/>
    </location>
</feature>
<feature type="transmembrane region" description="Helical" evidence="2">
    <location>
        <begin position="579"/>
        <end position="599"/>
    </location>
</feature>
<feature type="transmembrane region" description="Helical" evidence="2">
    <location>
        <begin position="609"/>
        <end position="629"/>
    </location>
</feature>
<feature type="transmembrane region" description="Helical" evidence="2">
    <location>
        <begin position="728"/>
        <end position="748"/>
    </location>
</feature>
<feature type="domain" description="ABC transporter" evidence="3">
    <location>
        <begin position="98"/>
        <end position="358"/>
    </location>
</feature>
<feature type="domain" description="ABC transmembrane type-2">
    <location>
        <begin position="449"/>
        <end position="659"/>
    </location>
</feature>
<feature type="binding site" evidence="3">
    <location>
        <begin position="151"/>
        <end position="158"/>
    </location>
    <ligand>
        <name>ATP</name>
        <dbReference type="ChEBI" id="CHEBI:30616"/>
    </ligand>
</feature>
<protein>
    <recommendedName>
        <fullName>ABC transporter G family member 2</fullName>
        <shortName>ABC transporter ABCG.2</shortName>
        <shortName>AtABCG2</shortName>
    </recommendedName>
    <alternativeName>
        <fullName>White-brown complex homolog protein 2</fullName>
        <shortName>AtWBC2</shortName>
    </alternativeName>
</protein>
<gene>
    <name type="primary">ABCG2</name>
    <name type="synonym">WBC2</name>
    <name type="ordered locus">At2g37360</name>
    <name type="ORF">F3G5.15</name>
</gene>